<protein>
    <recommendedName>
        <fullName evidence="3 4">Conotoxin TVIIA</fullName>
    </recommendedName>
</protein>
<proteinExistence type="evidence at protein level"/>
<comment type="function">
    <text>By structural similarity with conotoxin GS, may inhibit the sodium channel (Nav). No effect was observed upon intracranial injections into mice and intraperitoneal injections into goldfish (25 ug).</text>
</comment>
<comment type="subcellular location">
    <subcellularLocation>
        <location evidence="1">Secreted</location>
    </subcellularLocation>
</comment>
<comment type="tissue specificity">
    <text evidence="6">Expressed by the venom duct.</text>
</comment>
<comment type="domain">
    <text evidence="1">The presence of a 'disulfide through disulfide knot' structurally defines this protein as a knottin.</text>
</comment>
<comment type="domain">
    <text evidence="5">The cysteine framework is VI/VII (C-C-CC-C-C).</text>
</comment>
<comment type="PTM">
    <text evidence="1">Three different forms of TVIIA exist. Pro-10 and Pro-11 of conotoxin TVIIA are hydroxylated in TVIIA, whereas Pro-10 is not hydroxylated in [Pro10]TVIIA and neither Pro-10 nor Pro-11 are hydroxylated in [Pro10,11]TVIIA.</text>
</comment>
<comment type="mass spectrometry">
    <text>TVIIA with hydroxyPro-10 and hydroxyPro-11.</text>
</comment>
<comment type="mass spectrometry">
    <text>[Pro10]TVIIA with hydroxyPro-11.</text>
</comment>
<comment type="mass spectrometry">
    <text>[Pro10,Pro11]TVIIA.</text>
</comment>
<name>U7A_CONTU</name>
<keyword id="KW-0002">3D-structure</keyword>
<keyword id="KW-0903">Direct protein sequencing</keyword>
<keyword id="KW-1015">Disulfide bond</keyword>
<keyword id="KW-0379">Hydroxylation</keyword>
<keyword id="KW-0872">Ion channel impairing toxin</keyword>
<keyword id="KW-0960">Knottin</keyword>
<keyword id="KW-0528">Neurotoxin</keyword>
<keyword id="KW-0964">Secreted</keyword>
<keyword id="KW-0800">Toxin</keyword>
<keyword id="KW-0738">Voltage-gated sodium channel impairing toxin</keyword>
<organism>
    <name type="scientific">Conus tulipa</name>
    <name type="common">Fish-hunting cone snail</name>
    <name type="synonym">Tulip cone</name>
    <dbReference type="NCBI Taxonomy" id="6495"/>
    <lineage>
        <taxon>Eukaryota</taxon>
        <taxon>Metazoa</taxon>
        <taxon>Spiralia</taxon>
        <taxon>Lophotrochozoa</taxon>
        <taxon>Mollusca</taxon>
        <taxon>Gastropoda</taxon>
        <taxon>Caenogastropoda</taxon>
        <taxon>Neogastropoda</taxon>
        <taxon>Conoidea</taxon>
        <taxon>Conidae</taxon>
        <taxon>Conus</taxon>
        <taxon>Gastridium</taxon>
    </lineage>
</organism>
<evidence type="ECO:0000269" key="1">
    <source>
    </source>
</evidence>
<evidence type="ECO:0000269" key="2">
    <source>
    </source>
</evidence>
<evidence type="ECO:0000303" key="3">
    <source>
    </source>
</evidence>
<evidence type="ECO:0000303" key="4">
    <source>
    </source>
</evidence>
<evidence type="ECO:0000305" key="5"/>
<evidence type="ECO:0000305" key="6">
    <source>
    </source>
</evidence>
<evidence type="ECO:0000312" key="7">
    <source>
        <dbReference type="PDB" id="1EYO"/>
    </source>
</evidence>
<evidence type="ECO:0007829" key="8">
    <source>
        <dbReference type="PDB" id="1EYO"/>
    </source>
</evidence>
<feature type="peptide" id="PRO_0000044488" description="Conotoxin TVIIA">
    <location>
        <begin position="1"/>
        <end position="30"/>
    </location>
</feature>
<feature type="modified residue" description="4-hydroxyproline" evidence="1">
    <location>
        <position position="10"/>
    </location>
</feature>
<feature type="modified residue" description="4-hydroxyproline" evidence="1">
    <location>
        <position position="11"/>
    </location>
</feature>
<feature type="disulfide bond" evidence="2 7">
    <location>
        <begin position="2"/>
        <end position="14"/>
    </location>
</feature>
<feature type="disulfide bond" evidence="2 7">
    <location>
        <begin position="9"/>
        <end position="19"/>
    </location>
</feature>
<feature type="disulfide bond" evidence="2 7">
    <location>
        <begin position="13"/>
        <end position="24"/>
    </location>
</feature>
<feature type="strand" evidence="8">
    <location>
        <begin position="10"/>
        <end position="13"/>
    </location>
</feature>
<feature type="strand" evidence="8">
    <location>
        <begin position="20"/>
        <end position="23"/>
    </location>
</feature>
<feature type="turn" evidence="8">
    <location>
        <begin position="27"/>
        <end position="29"/>
    </location>
</feature>
<dbReference type="PDB" id="1EYO">
    <property type="method" value="NMR"/>
    <property type="chains" value="A=1-30"/>
</dbReference>
<dbReference type="PDBsum" id="1EYO"/>
<dbReference type="SMR" id="P58923"/>
<dbReference type="ConoServer" id="1405">
    <property type="toxin name" value="TVIIA"/>
</dbReference>
<dbReference type="EvolutionaryTrace" id="P58923"/>
<dbReference type="GO" id="GO:0005576">
    <property type="term" value="C:extracellular region"/>
    <property type="evidence" value="ECO:0007669"/>
    <property type="project" value="UniProtKB-SubCell"/>
</dbReference>
<dbReference type="GO" id="GO:0019871">
    <property type="term" value="F:sodium channel inhibitor activity"/>
    <property type="evidence" value="ECO:0007669"/>
    <property type="project" value="InterPro"/>
</dbReference>
<dbReference type="GO" id="GO:0090729">
    <property type="term" value="F:toxin activity"/>
    <property type="evidence" value="ECO:0007669"/>
    <property type="project" value="UniProtKB-KW"/>
</dbReference>
<dbReference type="InterPro" id="IPR012629">
    <property type="entry name" value="Conotoxin_TVIIAGS"/>
</dbReference>
<dbReference type="Pfam" id="PF08094">
    <property type="entry name" value="Toxin_24"/>
    <property type="match status" value="1"/>
</dbReference>
<dbReference type="SUPFAM" id="SSF57059">
    <property type="entry name" value="omega toxin-like"/>
    <property type="match status" value="1"/>
</dbReference>
<sequence>SCSGRDSRCPPVCCMGLMCSRGKCVSIYGE</sequence>
<reference key="1">
    <citation type="journal article" date="2000" name="Eur. J. Biochem.">
        <title>Conotoxin TVIIA, a novel peptide from the venom of Conus tulipa 1. Isolation, characterization and chemical synthesis.</title>
        <authorList>
            <person name="Hill J.M."/>
            <person name="Atkins A.R."/>
            <person name="Loughnan M.L."/>
            <person name="Jones A."/>
            <person name="Adams D.A."/>
            <person name="Martin R.C."/>
            <person name="Lewis R.J."/>
            <person name="Craik D.J."/>
            <person name="Alewood P.F."/>
        </authorList>
    </citation>
    <scope>PROTEIN SEQUENCE</scope>
    <scope>HYDROXYLATION AT PRO-10 AND PRO-11</scope>
    <scope>SYNTHESIS</scope>
    <scope>MASS SPECTROMETRY</scope>
    <scope>COMPARISON WITH CONOTOXIN GS</scope>
    <scope>SUBCELLULAR LOCATION</scope>
    <source>
        <tissue>Venom</tissue>
    </source>
</reference>
<reference key="2">
    <citation type="journal article" date="2000" name="Eur. J. Biochem.">
        <title>Conotoxin TVIIA, a novel peptide from the venom of Conus tulipa 2. Three-dimensional solution structure.</title>
        <authorList>
            <person name="Hill J.M."/>
            <person name="Alewood P.F."/>
            <person name="Craik D.J."/>
        </authorList>
    </citation>
    <scope>SYNTHESIS</scope>
    <scope>STRUCTURE BY NMR</scope>
    <scope>DISULFIDE BOND</scope>
    <scope>COMPARISON WITH CONOTOXIN GS</scope>
</reference>
<accession>P58923</accession>